<sequence>MKIAIGCDEMGYELKQTLITRLKEKNIEFTDFGSFENEKVLYPSIAEKVALEVKNNDYDRGILICGTGIGMAITANKIHGIRAAQIHDSYSAERARKSNDAHIMTMGALVIGPSLAVSLLDTWLDSDFSGGRSQAKVDLMEEIDQKNR</sequence>
<accession>Q92EU5</accession>
<proteinExistence type="evidence at protein level"/>
<feature type="chain" id="PRO_0000439509" description="Ribose-5-P isomerase B">
    <location>
        <begin position="1"/>
        <end position="148"/>
    </location>
</feature>
<feature type="active site" description="Proton acceptor" evidence="1">
    <location>
        <position position="65"/>
    </location>
</feature>
<feature type="binding site" evidence="2">
    <location>
        <begin position="8"/>
        <end position="9"/>
    </location>
    <ligand>
        <name>D-ribulose 5-phosphate</name>
        <dbReference type="ChEBI" id="CHEBI:58121"/>
    </ligand>
</feature>
<feature type="binding site" evidence="2">
    <location>
        <begin position="66"/>
        <end position="70"/>
    </location>
    <ligand>
        <name>D-ribulose 5-phosphate</name>
        <dbReference type="ChEBI" id="CHEBI:58121"/>
    </ligand>
</feature>
<feature type="binding site" evidence="2">
    <location>
        <position position="99"/>
    </location>
    <ligand>
        <name>D-ribulose 5-phosphate</name>
        <dbReference type="ChEBI" id="CHEBI:58121"/>
    </ligand>
</feature>
<feature type="binding site" evidence="2">
    <location>
        <position position="132"/>
    </location>
    <ligand>
        <name>D-ribulose 5-phosphate</name>
        <dbReference type="ChEBI" id="CHEBI:58121"/>
    </ligand>
</feature>
<feature type="binding site" evidence="2">
    <location>
        <position position="136"/>
    </location>
    <ligand>
        <name>D-ribulose 5-phosphate</name>
        <dbReference type="ChEBI" id="CHEBI:58121"/>
    </ligand>
</feature>
<name>RPIB_LISIN</name>
<comment type="function">
    <text evidence="3">Catalyzes the interconversion of ribulose-5-P and ribose-5-P.</text>
</comment>
<comment type="catalytic activity">
    <reaction evidence="3">
        <text>aldehydo-D-ribose 5-phosphate = D-ribulose 5-phosphate</text>
        <dbReference type="Rhea" id="RHEA:14657"/>
        <dbReference type="ChEBI" id="CHEBI:58121"/>
        <dbReference type="ChEBI" id="CHEBI:58273"/>
        <dbReference type="EC" id="5.3.1.6"/>
    </reaction>
</comment>
<comment type="pathway">
    <text evidence="6">Carbohydrate degradation; pentose phosphate pathway; D-ribose 5-phosphate from D-ribulose 5-phosphate (non-oxidative stage): step 1/1.</text>
</comment>
<comment type="induction">
    <text evidence="3">Repressed by GolR.</text>
</comment>
<comment type="similarity">
    <text evidence="5">Belongs to the LacAB/RpiB family.</text>
</comment>
<gene>
    <name evidence="4" type="primary">rpiB</name>
    <name evidence="7" type="ordered locus">lin0363</name>
</gene>
<dbReference type="EC" id="5.3.1.6" evidence="3"/>
<dbReference type="EMBL" id="AL596164">
    <property type="protein sequence ID" value="CAC95596.1"/>
    <property type="molecule type" value="Genomic_DNA"/>
</dbReference>
<dbReference type="PIR" id="AD1478">
    <property type="entry name" value="AD1478"/>
</dbReference>
<dbReference type="RefSeq" id="WP_003724276.1">
    <property type="nucleotide sequence ID" value="NC_003212.1"/>
</dbReference>
<dbReference type="SMR" id="Q92EU5"/>
<dbReference type="STRING" id="272626.gene:17564690"/>
<dbReference type="KEGG" id="lin:lin0363"/>
<dbReference type="eggNOG" id="COG0698">
    <property type="taxonomic scope" value="Bacteria"/>
</dbReference>
<dbReference type="HOGENOM" id="CLU_091396_4_1_9"/>
<dbReference type="OrthoDB" id="1778624at2"/>
<dbReference type="UniPathway" id="UPA00115">
    <property type="reaction ID" value="UER00412"/>
</dbReference>
<dbReference type="Proteomes" id="UP000002513">
    <property type="component" value="Chromosome"/>
</dbReference>
<dbReference type="GO" id="GO:0004751">
    <property type="term" value="F:ribose-5-phosphate isomerase activity"/>
    <property type="evidence" value="ECO:0000314"/>
    <property type="project" value="UniProtKB"/>
</dbReference>
<dbReference type="GO" id="GO:0005975">
    <property type="term" value="P:carbohydrate metabolic process"/>
    <property type="evidence" value="ECO:0007669"/>
    <property type="project" value="InterPro"/>
</dbReference>
<dbReference type="GO" id="GO:0006098">
    <property type="term" value="P:pentose-phosphate shunt"/>
    <property type="evidence" value="ECO:0007669"/>
    <property type="project" value="UniProtKB-UniPathway"/>
</dbReference>
<dbReference type="Gene3D" id="3.40.1400.10">
    <property type="entry name" value="Sugar-phosphate isomerase, RpiB/LacA/LacB"/>
    <property type="match status" value="1"/>
</dbReference>
<dbReference type="InterPro" id="IPR004785">
    <property type="entry name" value="RpiB"/>
</dbReference>
<dbReference type="InterPro" id="IPR003500">
    <property type="entry name" value="RpiB_LacA_LacB"/>
</dbReference>
<dbReference type="InterPro" id="IPR036569">
    <property type="entry name" value="RpiB_LacA_LacB_sf"/>
</dbReference>
<dbReference type="InterPro" id="IPR051812">
    <property type="entry name" value="SPI_LacAB/RpiB"/>
</dbReference>
<dbReference type="NCBIfam" id="NF004051">
    <property type="entry name" value="PRK05571.1"/>
    <property type="match status" value="1"/>
</dbReference>
<dbReference type="NCBIfam" id="TIGR01120">
    <property type="entry name" value="rpiB"/>
    <property type="match status" value="1"/>
</dbReference>
<dbReference type="NCBIfam" id="TIGR00689">
    <property type="entry name" value="rpiB_lacA_lacB"/>
    <property type="match status" value="1"/>
</dbReference>
<dbReference type="PANTHER" id="PTHR43732:SF1">
    <property type="entry name" value="RIBOSE 5-PHOSPHATE ISOMERASE"/>
    <property type="match status" value="1"/>
</dbReference>
<dbReference type="PANTHER" id="PTHR43732">
    <property type="entry name" value="RIBOSE 5-PHOSPHATE ISOMERASE-RELATED"/>
    <property type="match status" value="1"/>
</dbReference>
<dbReference type="Pfam" id="PF02502">
    <property type="entry name" value="LacAB_rpiB"/>
    <property type="match status" value="1"/>
</dbReference>
<dbReference type="PIRSF" id="PIRSF005384">
    <property type="entry name" value="RpiB_LacA_B"/>
    <property type="match status" value="1"/>
</dbReference>
<dbReference type="SUPFAM" id="SSF89623">
    <property type="entry name" value="Ribose/Galactose isomerase RpiB/AlsB"/>
    <property type="match status" value="1"/>
</dbReference>
<organism>
    <name type="scientific">Listeria innocua serovar 6a (strain ATCC BAA-680 / CLIP 11262)</name>
    <dbReference type="NCBI Taxonomy" id="272626"/>
    <lineage>
        <taxon>Bacteria</taxon>
        <taxon>Bacillati</taxon>
        <taxon>Bacillota</taxon>
        <taxon>Bacilli</taxon>
        <taxon>Bacillales</taxon>
        <taxon>Listeriaceae</taxon>
        <taxon>Listeria</taxon>
    </lineage>
</organism>
<protein>
    <recommendedName>
        <fullName evidence="4">Ribose-5-P isomerase B</fullName>
        <ecNumber evidence="3">5.3.1.6</ecNumber>
    </recommendedName>
    <alternativeName>
        <fullName evidence="4">RpiB-type ribose-5-P isomerase</fullName>
    </alternativeName>
</protein>
<reference key="1">
    <citation type="journal article" date="2001" name="Science">
        <title>Comparative genomics of Listeria species.</title>
        <authorList>
            <person name="Glaser P."/>
            <person name="Frangeul L."/>
            <person name="Buchrieser C."/>
            <person name="Rusniok C."/>
            <person name="Amend A."/>
            <person name="Baquero F."/>
            <person name="Berche P."/>
            <person name="Bloecker H."/>
            <person name="Brandt P."/>
            <person name="Chakraborty T."/>
            <person name="Charbit A."/>
            <person name="Chetouani F."/>
            <person name="Couve E."/>
            <person name="de Daruvar A."/>
            <person name="Dehoux P."/>
            <person name="Domann E."/>
            <person name="Dominguez-Bernal G."/>
            <person name="Duchaud E."/>
            <person name="Durant L."/>
            <person name="Dussurget O."/>
            <person name="Entian K.-D."/>
            <person name="Fsihi H."/>
            <person name="Garcia-del Portillo F."/>
            <person name="Garrido P."/>
            <person name="Gautier L."/>
            <person name="Goebel W."/>
            <person name="Gomez-Lopez N."/>
            <person name="Hain T."/>
            <person name="Hauf J."/>
            <person name="Jackson D."/>
            <person name="Jones L.-M."/>
            <person name="Kaerst U."/>
            <person name="Kreft J."/>
            <person name="Kuhn M."/>
            <person name="Kunst F."/>
            <person name="Kurapkat G."/>
            <person name="Madueno E."/>
            <person name="Maitournam A."/>
            <person name="Mata Vicente J."/>
            <person name="Ng E."/>
            <person name="Nedjari H."/>
            <person name="Nordsiek G."/>
            <person name="Novella S."/>
            <person name="de Pablos B."/>
            <person name="Perez-Diaz J.-C."/>
            <person name="Purcell R."/>
            <person name="Remmel B."/>
            <person name="Rose M."/>
            <person name="Schlueter T."/>
            <person name="Simoes N."/>
            <person name="Tierrez A."/>
            <person name="Vazquez-Boland J.-A."/>
            <person name="Voss H."/>
            <person name="Wehland J."/>
            <person name="Cossart P."/>
        </authorList>
    </citation>
    <scope>NUCLEOTIDE SEQUENCE [LARGE SCALE GENOMIC DNA]</scope>
    <source>
        <strain>ATCC BAA-680 / CLIP 11262</strain>
    </source>
</reference>
<reference key="2">
    <citation type="journal article" date="2012" name="J. Bacteriol.">
        <title>Novel listerial glycerol dehydrogenase- and phosphoenolpyruvate-dependent dihydroxyacetone kinase system connected to the pentose phosphate pathway.</title>
        <authorList>
            <person name="Monniot C."/>
            <person name="Zebre A.C."/>
            <person name="Ake F.M."/>
            <person name="Deutscher J."/>
            <person name="Milohanic E."/>
        </authorList>
    </citation>
    <scope>FUNCTION</scope>
    <scope>CATALYTIC ACTIVITY</scope>
    <scope>INDUCTION</scope>
    <scope>PATHWAY</scope>
    <source>
        <strain>ATCC BAA-680 / CLIP 11262</strain>
    </source>
</reference>
<keyword id="KW-0119">Carbohydrate metabolism</keyword>
<keyword id="KW-0413">Isomerase</keyword>
<evidence type="ECO:0000250" key="1">
    <source>
        <dbReference type="UniProtKB" id="P37351"/>
    </source>
</evidence>
<evidence type="ECO:0000250" key="2">
    <source>
        <dbReference type="UniProtKB" id="P9WKD7"/>
    </source>
</evidence>
<evidence type="ECO:0000269" key="3">
    <source>
    </source>
</evidence>
<evidence type="ECO:0000303" key="4">
    <source>
    </source>
</evidence>
<evidence type="ECO:0000305" key="5"/>
<evidence type="ECO:0000305" key="6">
    <source>
    </source>
</evidence>
<evidence type="ECO:0000312" key="7">
    <source>
        <dbReference type="EMBL" id="CAC95596.1"/>
    </source>
</evidence>